<keyword id="KW-0961">Cell wall biogenesis/degradation</keyword>
<keyword id="KW-0333">Golgi apparatus</keyword>
<keyword id="KW-0597">Phosphoprotein</keyword>
<keyword id="KW-0653">Protein transport</keyword>
<keyword id="KW-0813">Transport</keyword>
<reference key="1">
    <citation type="journal article" date="2007" name="Proc. Natl. Acad. Sci. U.S.A.">
        <title>Genome sequencing and comparative analysis of Saccharomyces cerevisiae strain YJM789.</title>
        <authorList>
            <person name="Wei W."/>
            <person name="McCusker J.H."/>
            <person name="Hyman R.W."/>
            <person name="Jones T."/>
            <person name="Ning Y."/>
            <person name="Cao Z."/>
            <person name="Gu Z."/>
            <person name="Bruno D."/>
            <person name="Miranda M."/>
            <person name="Nguyen M."/>
            <person name="Wilhelmy J."/>
            <person name="Komp C."/>
            <person name="Tamse R."/>
            <person name="Wang X."/>
            <person name="Jia P."/>
            <person name="Luedi P."/>
            <person name="Oefner P.J."/>
            <person name="David L."/>
            <person name="Dietrich F.S."/>
            <person name="Li Y."/>
            <person name="Davis R.W."/>
            <person name="Steinmetz L.M."/>
        </authorList>
    </citation>
    <scope>NUCLEOTIDE SEQUENCE [LARGE SCALE GENOMIC DNA]</scope>
    <source>
        <strain>YJM789</strain>
    </source>
</reference>
<evidence type="ECO:0000250" key="1"/>
<evidence type="ECO:0000250" key="2">
    <source>
        <dbReference type="UniProtKB" id="P42223"/>
    </source>
</evidence>
<evidence type="ECO:0000256" key="3">
    <source>
        <dbReference type="SAM" id="MobiDB-lite"/>
    </source>
</evidence>
<evidence type="ECO:0000305" key="4"/>
<name>SBE2_YEAS7</name>
<gene>
    <name type="primary">SBE2</name>
    <name type="ORF">SCY_1239</name>
</gene>
<dbReference type="EMBL" id="AAFW02000145">
    <property type="protein sequence ID" value="EDN60681.1"/>
    <property type="molecule type" value="Genomic_DNA"/>
</dbReference>
<dbReference type="SMR" id="A6ZYV1"/>
<dbReference type="TopDownProteomics" id="A6ZYV1"/>
<dbReference type="HOGENOM" id="CLU_019068_0_0_1"/>
<dbReference type="Proteomes" id="UP000007060">
    <property type="component" value="Unassembled WGS sequence"/>
</dbReference>
<dbReference type="GO" id="GO:0005794">
    <property type="term" value="C:Golgi apparatus"/>
    <property type="evidence" value="ECO:0007669"/>
    <property type="project" value="UniProtKB-SubCell"/>
</dbReference>
<dbReference type="GO" id="GO:0031505">
    <property type="term" value="P:fungal-type cell wall organization"/>
    <property type="evidence" value="ECO:0007669"/>
    <property type="project" value="InterPro"/>
</dbReference>
<dbReference type="GO" id="GO:0015031">
    <property type="term" value="P:protein transport"/>
    <property type="evidence" value="ECO:0007669"/>
    <property type="project" value="UniProtKB-KW"/>
</dbReference>
<dbReference type="InterPro" id="IPR031403">
    <property type="entry name" value="Sbe2/Sbe22_C"/>
</dbReference>
<dbReference type="InterPro" id="IPR053949">
    <property type="entry name" value="SBE2/SBE22_M"/>
</dbReference>
<dbReference type="InterPro" id="IPR053948">
    <property type="entry name" value="SBE2/SBE22_N"/>
</dbReference>
<dbReference type="Pfam" id="PF17076">
    <property type="entry name" value="SBE2_C"/>
    <property type="match status" value="1"/>
</dbReference>
<dbReference type="Pfam" id="PF22874">
    <property type="entry name" value="SBE2_M"/>
    <property type="match status" value="1"/>
</dbReference>
<dbReference type="Pfam" id="PF22876">
    <property type="entry name" value="SBE2_N"/>
    <property type="match status" value="1"/>
</dbReference>
<feature type="chain" id="PRO_0000320507" description="Protein SBE2">
    <location>
        <begin position="1"/>
        <end position="864"/>
    </location>
</feature>
<feature type="region of interest" description="Disordered" evidence="3">
    <location>
        <begin position="16"/>
        <end position="84"/>
    </location>
</feature>
<feature type="region of interest" description="Disordered" evidence="3">
    <location>
        <begin position="123"/>
        <end position="142"/>
    </location>
</feature>
<feature type="region of interest" description="Disordered" evidence="3">
    <location>
        <begin position="213"/>
        <end position="235"/>
    </location>
</feature>
<feature type="compositionally biased region" description="Basic and acidic residues" evidence="3">
    <location>
        <begin position="17"/>
        <end position="26"/>
    </location>
</feature>
<feature type="compositionally biased region" description="Low complexity" evidence="3">
    <location>
        <begin position="51"/>
        <end position="71"/>
    </location>
</feature>
<feature type="compositionally biased region" description="Polar residues" evidence="3">
    <location>
        <begin position="72"/>
        <end position="84"/>
    </location>
</feature>
<feature type="compositionally biased region" description="Low complexity" evidence="3">
    <location>
        <begin position="123"/>
        <end position="139"/>
    </location>
</feature>
<feature type="compositionally biased region" description="Polar residues" evidence="3">
    <location>
        <begin position="213"/>
        <end position="222"/>
    </location>
</feature>
<feature type="modified residue" description="Phosphoserine" evidence="2">
    <location>
        <position position="82"/>
    </location>
</feature>
<feature type="modified residue" description="Phosphoserine" evidence="2">
    <location>
        <position position="83"/>
    </location>
</feature>
<feature type="modified residue" description="Phosphoserine" evidence="2">
    <location>
        <position position="450"/>
    </location>
</feature>
<feature type="modified residue" description="Phosphoserine" evidence="2">
    <location>
        <position position="532"/>
    </location>
</feature>
<protein>
    <recommendedName>
        <fullName>Protein SBE2</fullName>
    </recommendedName>
    <alternativeName>
        <fullName>Suppressor of BEM4 protein 2</fullName>
    </alternativeName>
</protein>
<sequence length="864" mass="98971">MTARRLINIVPNTSKLDPLKEEDSTHLKQNQPKKFSTKELMLSEYTERKSCSLPLSKSRSGSSASSSTTGSNGKNIGTRRPSSNLDFNFASQDVVKNVLGNNNPHVPTAKCIRPISDDSIGTSSTEIFSSSHSNTTSDSLCTSDISSEEGEIANSKMEDNCFFKSMREADHRSNITPLKKSRPGSILQKTRTASSADKTICSMSTITTCIPSRQNSVSTPKLSRTVGLPGSSNTTNSIAASQTSFISENDSPLKHHCMSTATIQEPKLMPITKTPYVHSNSTSVILPYKTTQLTPSQRYRLRKEQNDQSLRKAIKMKEKFYEDQDVNLELQEGDVDGSLIWNIPMASLSTSSFLTLSKFNRKEMSLDSARGDEEILIQENNCEGKQHSSSALCVDKTFHQVHSTRKHTSNSSNTLKESCLDYKELPPTCIPGISPVSDSQYIQDTMKNLSQIYLHSSEKISKSILSGRSRSVQSLPLEFKEASSQGMEDLMLVSEDKLKAVSHFRPSWLPPKDFKERKLQDKQIYKNIDLASMEELQKNKERDEKAKKNEQNKVKFQHLLDRGITRNSSLSELKKIIWETPLISKVRLQIYSQLLQSDNCLITKCFIESFEEVMQLLNKMDFPKDKEFEIRQLIEHDVQEKVFYKNGTDKQVVSDLMLLLQLKSISQQGLVTGDEMLFYHFLTDQSFGTLKETWEMVNLIQMTCFSEICKEKYDSRILNPRGIVAHLLRKDEFKNEFNGGCLNSNTWWNILQRMDHKLFMWVMDVIIVHNGQNFANYPVKMEIFKDKVWEYYRSKKVIVNYKILVSLTVNVLLNYHFGYDNLKHLSDLDDKHFCIPLYTEDSIEEENLNNIFTKWWLHYYRKLR</sequence>
<accession>A6ZYV1</accession>
<organism>
    <name type="scientific">Saccharomyces cerevisiae (strain YJM789)</name>
    <name type="common">Baker's yeast</name>
    <dbReference type="NCBI Taxonomy" id="307796"/>
    <lineage>
        <taxon>Eukaryota</taxon>
        <taxon>Fungi</taxon>
        <taxon>Dikarya</taxon>
        <taxon>Ascomycota</taxon>
        <taxon>Saccharomycotina</taxon>
        <taxon>Saccharomycetes</taxon>
        <taxon>Saccharomycetales</taxon>
        <taxon>Saccharomycetaceae</taxon>
        <taxon>Saccharomyces</taxon>
    </lineage>
</organism>
<proteinExistence type="inferred from homology"/>
<comment type="function">
    <text evidence="1">With SBE22, is involved in cell wall integrity and polarity processes like bud growth, through the transport of CHS3 and UTR2 to sites of growth.</text>
</comment>
<comment type="subcellular location">
    <subcellularLocation>
        <location evidence="1">Golgi apparatus</location>
    </subcellularLocation>
</comment>
<comment type="similarity">
    <text evidence="4">Belongs to the SBE2 family.</text>
</comment>